<comment type="subcellular location">
    <subcellularLocation>
        <location evidence="2">Cell membrane</location>
        <topology evidence="2">Multi-pass membrane protein</topology>
    </subcellularLocation>
</comment>
<feature type="chain" id="PRO_0000200974" description="Uncharacterized protein y4yQ">
    <location>
        <begin position="1"/>
        <end position="296"/>
    </location>
</feature>
<feature type="transmembrane region" description="Helical" evidence="1">
    <location>
        <begin position="82"/>
        <end position="102"/>
    </location>
</feature>
<feature type="transmembrane region" description="Helical" evidence="1">
    <location>
        <begin position="117"/>
        <end position="137"/>
    </location>
</feature>
<evidence type="ECO:0000255" key="1"/>
<evidence type="ECO:0000305" key="2"/>
<proteinExistence type="predicted"/>
<accession>P55725</accession>
<organism>
    <name type="scientific">Sinorhizobium fredii (strain NBRC 101917 / NGR234)</name>
    <dbReference type="NCBI Taxonomy" id="394"/>
    <lineage>
        <taxon>Bacteria</taxon>
        <taxon>Pseudomonadati</taxon>
        <taxon>Pseudomonadota</taxon>
        <taxon>Alphaproteobacteria</taxon>
        <taxon>Hyphomicrobiales</taxon>
        <taxon>Rhizobiaceae</taxon>
        <taxon>Sinorhizobium/Ensifer group</taxon>
        <taxon>Sinorhizobium</taxon>
    </lineage>
</organism>
<dbReference type="EMBL" id="U00090">
    <property type="protein sequence ID" value="AAB91956.1"/>
    <property type="molecule type" value="Genomic_DNA"/>
</dbReference>
<dbReference type="RefSeq" id="NP_444169.1">
    <property type="nucleotide sequence ID" value="NC_000914.2"/>
</dbReference>
<dbReference type="RefSeq" id="WP_010875095.1">
    <property type="nucleotide sequence ID" value="NC_000914.2"/>
</dbReference>
<dbReference type="SMR" id="P55725"/>
<dbReference type="KEGG" id="rhi:NGR_a00540"/>
<dbReference type="eggNOG" id="ENOG5032SWF">
    <property type="taxonomic scope" value="Bacteria"/>
</dbReference>
<dbReference type="HOGENOM" id="CLU_072998_0_0_5"/>
<dbReference type="OrthoDB" id="9806163at2"/>
<dbReference type="Proteomes" id="UP000001054">
    <property type="component" value="Plasmid pNGR234a"/>
</dbReference>
<dbReference type="GO" id="GO:0005886">
    <property type="term" value="C:plasma membrane"/>
    <property type="evidence" value="ECO:0007669"/>
    <property type="project" value="UniProtKB-SubCell"/>
</dbReference>
<dbReference type="InterPro" id="IPR053946">
    <property type="entry name" value="YscD_ppl_3rd"/>
</dbReference>
<dbReference type="Pfam" id="PF23893">
    <property type="entry name" value="Y4YQ_C"/>
    <property type="match status" value="1"/>
</dbReference>
<dbReference type="Pfam" id="PF21934">
    <property type="entry name" value="Yop-YscD_ppl_3rd"/>
    <property type="match status" value="1"/>
</dbReference>
<reference key="1">
    <citation type="journal article" date="1997" name="Nature">
        <title>Molecular basis of symbiosis between Rhizobium and legumes.</title>
        <authorList>
            <person name="Freiberg C.A."/>
            <person name="Fellay R."/>
            <person name="Bairoch A."/>
            <person name="Broughton W.J."/>
            <person name="Rosenthal A."/>
            <person name="Perret X."/>
        </authorList>
    </citation>
    <scope>NUCLEOTIDE SEQUENCE [LARGE SCALE GENOMIC DNA]</scope>
    <source>
        <strain>NBRC 101917 / NGR234</strain>
    </source>
</reference>
<reference key="2">
    <citation type="journal article" date="2009" name="Appl. Environ. Microbiol.">
        <title>Rhizobium sp. strain NGR234 possesses a remarkable number of secretion systems.</title>
        <authorList>
            <person name="Schmeisser C."/>
            <person name="Liesegang H."/>
            <person name="Krysciak D."/>
            <person name="Bakkou N."/>
            <person name="Le Quere A."/>
            <person name="Wollherr A."/>
            <person name="Heinemeyer I."/>
            <person name="Morgenstern B."/>
            <person name="Pommerening-Roeser A."/>
            <person name="Flores M."/>
            <person name="Palacios R."/>
            <person name="Brenner S."/>
            <person name="Gottschalk G."/>
            <person name="Schmitz R.A."/>
            <person name="Broughton W.J."/>
            <person name="Perret X."/>
            <person name="Strittmatter A.W."/>
            <person name="Streit W.R."/>
        </authorList>
    </citation>
    <scope>NUCLEOTIDE SEQUENCE [LARGE SCALE GENOMIC DNA]</scope>
    <source>
        <strain>NBRC 101917 / NGR234</strain>
    </source>
</reference>
<keyword id="KW-1003">Cell membrane</keyword>
<keyword id="KW-0472">Membrane</keyword>
<keyword id="KW-0614">Plasmid</keyword>
<keyword id="KW-1185">Reference proteome</keyword>
<keyword id="KW-0812">Transmembrane</keyword>
<keyword id="KW-1133">Transmembrane helix</keyword>
<protein>
    <recommendedName>
        <fullName>Uncharacterized protein y4yQ</fullName>
    </recommendedName>
</protein>
<sequence>MNDAISLQFKVISGLYCELTGTTALETSLIGSGLDADIVFVEQGLAPHHFRVTLLGKTLEVEALAAGLSIEGNGNIAAGERVVAPLPVVIHAGAMSILWSVQDAASSGSIGKPRLSISVLALVLLGSLGIGVLSAIFSYYDNAVVSNADLSGEAREPKLPDNRTDDETAFTAAKALQQEVDRAGLSNIKISAAEGVVTVEGTVTSASAISWHKVQQWFDHRTRGALALLNGVIIDDEKAPSAIAVEAVWRGSLPYLVIKGEKYFVGALLDDGWMVERIEDGRVMLSRNGRLAAVPY</sequence>
<geneLocation type="plasmid">
    <name>sym pNGR234a</name>
</geneLocation>
<gene>
    <name type="ordered locus">NGR_a00540</name>
    <name type="ORF">y4yQ</name>
</gene>
<name>Y4YQ_SINFN</name>